<comment type="function">
    <text evidence="1">Excises ethenocytosine and uracil, which can arise by alkylation or deamination of cytosine, respectively, from the corresponding mispairs with guanine in ds-DNA. It is capable of hydrolyzing the carbon-nitrogen bond between the sugar-phosphate backbone of the DNA and the mispaired base. The complementary strand guanine functions in substrate recognition. Required for DNA damage lesion repair in stationary-phase cells.</text>
</comment>
<comment type="catalytic activity">
    <reaction evidence="1">
        <text>Specifically hydrolyzes mismatched double-stranded DNA and polynucleotides, releasing free uracil.</text>
        <dbReference type="EC" id="3.2.2.28"/>
    </reaction>
</comment>
<comment type="subunit">
    <text evidence="1">Binds DNA as a monomer.</text>
</comment>
<comment type="subcellular location">
    <subcellularLocation>
        <location evidence="1">Cytoplasm</location>
    </subcellularLocation>
</comment>
<comment type="similarity">
    <text evidence="1">Belongs to the uracil-DNA glycosylase (UDG) superfamily. TDG/mug family.</text>
</comment>
<feature type="chain" id="PRO_0000185776" description="G/U mismatch-specific DNA glycosylase">
    <location>
        <begin position="1"/>
        <end position="162"/>
    </location>
</feature>
<organism>
    <name type="scientific">Serratia marcescens</name>
    <dbReference type="NCBI Taxonomy" id="615"/>
    <lineage>
        <taxon>Bacteria</taxon>
        <taxon>Pseudomonadati</taxon>
        <taxon>Pseudomonadota</taxon>
        <taxon>Gammaproteobacteria</taxon>
        <taxon>Enterobacterales</taxon>
        <taxon>Yersiniaceae</taxon>
        <taxon>Serratia</taxon>
    </lineage>
</organism>
<name>MUG_SERMA</name>
<gene>
    <name evidence="1" type="primary">mug</name>
</gene>
<sequence>MELLAPNLRVVFCGINPGLSSAHQGYPFANGSNRFWKVIHQAGFTESQLAPEQWQQLKDNGCGITALVARPTVAASELSRDELRSGGEALQEKILRYQPRALAILGKQAFTTAFGVKNAPWGKQTLTLGETEVWVLPNPSGLNRATLEQLTASYRELFLALQ</sequence>
<evidence type="ECO:0000255" key="1">
    <source>
        <dbReference type="HAMAP-Rule" id="MF_01956"/>
    </source>
</evidence>
<accession>P43343</accession>
<proteinExistence type="inferred from homology"/>
<keyword id="KW-0963">Cytoplasm</keyword>
<keyword id="KW-0227">DNA damage</keyword>
<keyword id="KW-0228">DNA excision</keyword>
<keyword id="KW-0234">DNA repair</keyword>
<keyword id="KW-0238">DNA-binding</keyword>
<keyword id="KW-0378">Hydrolase</keyword>
<dbReference type="EC" id="3.2.2.28" evidence="1"/>
<dbReference type="EMBL" id="M94066">
    <property type="status" value="NOT_ANNOTATED_CDS"/>
    <property type="molecule type" value="Genomic_DNA"/>
</dbReference>
<dbReference type="RefSeq" id="WP_033649053.1">
    <property type="nucleotide sequence ID" value="NZ_WUWF01000013.1"/>
</dbReference>
<dbReference type="SMR" id="P43343"/>
<dbReference type="STRING" id="273526.SMDB11_3534"/>
<dbReference type="PATRIC" id="fig|615.102.peg.3547"/>
<dbReference type="GO" id="GO:0005737">
    <property type="term" value="C:cytoplasm"/>
    <property type="evidence" value="ECO:0007669"/>
    <property type="project" value="UniProtKB-SubCell"/>
</dbReference>
<dbReference type="GO" id="GO:0003677">
    <property type="term" value="F:DNA binding"/>
    <property type="evidence" value="ECO:0007669"/>
    <property type="project" value="UniProtKB-KW"/>
</dbReference>
<dbReference type="GO" id="GO:0008263">
    <property type="term" value="F:pyrimidine-specific mismatch base pair DNA N-glycosylase activity"/>
    <property type="evidence" value="ECO:0007669"/>
    <property type="project" value="UniProtKB-UniRule"/>
</dbReference>
<dbReference type="GO" id="GO:0004844">
    <property type="term" value="F:uracil DNA N-glycosylase activity"/>
    <property type="evidence" value="ECO:0007669"/>
    <property type="project" value="TreeGrafter"/>
</dbReference>
<dbReference type="GO" id="GO:0006285">
    <property type="term" value="P:base-excision repair, AP site formation"/>
    <property type="evidence" value="ECO:0007669"/>
    <property type="project" value="UniProtKB-UniRule"/>
</dbReference>
<dbReference type="CDD" id="cd10028">
    <property type="entry name" value="UDG-F2_TDG_MUG"/>
    <property type="match status" value="1"/>
</dbReference>
<dbReference type="Gene3D" id="3.40.470.10">
    <property type="entry name" value="Uracil-DNA glycosylase-like domain"/>
    <property type="match status" value="1"/>
</dbReference>
<dbReference type="HAMAP" id="MF_01956">
    <property type="entry name" value="MUG"/>
    <property type="match status" value="1"/>
</dbReference>
<dbReference type="InterPro" id="IPR015637">
    <property type="entry name" value="MUG/TDG"/>
</dbReference>
<dbReference type="InterPro" id="IPR023502">
    <property type="entry name" value="MUG_bact"/>
</dbReference>
<dbReference type="InterPro" id="IPR005122">
    <property type="entry name" value="Uracil-DNA_glycosylase-like"/>
</dbReference>
<dbReference type="InterPro" id="IPR036895">
    <property type="entry name" value="Uracil-DNA_glycosylase-like_sf"/>
</dbReference>
<dbReference type="NCBIfam" id="NF007570">
    <property type="entry name" value="PRK10201.1"/>
    <property type="match status" value="1"/>
</dbReference>
<dbReference type="PANTHER" id="PTHR12159">
    <property type="entry name" value="G/T AND G/U MISMATCH-SPECIFIC DNA GLYCOSYLASE"/>
    <property type="match status" value="1"/>
</dbReference>
<dbReference type="PANTHER" id="PTHR12159:SF9">
    <property type="entry name" value="G_T MISMATCH-SPECIFIC THYMINE DNA GLYCOSYLASE"/>
    <property type="match status" value="1"/>
</dbReference>
<dbReference type="Pfam" id="PF03167">
    <property type="entry name" value="UDG"/>
    <property type="match status" value="1"/>
</dbReference>
<dbReference type="SUPFAM" id="SSF52141">
    <property type="entry name" value="Uracil-DNA glycosylase-like"/>
    <property type="match status" value="1"/>
</dbReference>
<protein>
    <recommendedName>
        <fullName evidence="1">G/U mismatch-specific DNA glycosylase</fullName>
        <ecNumber evidence="1">3.2.2.28</ecNumber>
    </recommendedName>
    <alternativeName>
        <fullName evidence="1">Double-strand-specific uracil glycosylase</fullName>
    </alternativeName>
    <alternativeName>
        <fullName evidence="1">Mismatch-specific uracil DNA-glycosylase</fullName>
        <shortName evidence="1">MUG</shortName>
    </alternativeName>
</protein>
<reference key="1">
    <citation type="journal article" date="1992" name="Antimicrob. Agents Chemother.">
        <title>Characterization of the chromosomal aac(6')-Ic gene from Serratia marcescens.</title>
        <authorList>
            <person name="Shaw K.J."/>
            <person name="Rather P.N."/>
            <person name="Sabatelli F.J."/>
            <person name="Mann P."/>
            <person name="Munayyer H."/>
            <person name="Mierzwa R."/>
            <person name="Petrikkos G.L."/>
            <person name="Hare R.S."/>
            <person name="Miller G.H."/>
            <person name="Bennett P."/>
        </authorList>
    </citation>
    <scope>NUCLEOTIDE SEQUENCE [GENOMIC DNA]</scope>
</reference>
<reference key="2">
    <citation type="journal article" date="1995" name="Nucleic Acids Res.">
        <title>Detection of new genes in a bacterial genome using Markov models for three gene classes.</title>
        <authorList>
            <person name="Borodovsky M."/>
            <person name="McIninch J."/>
            <person name="Koonin E.V."/>
            <person name="Rudd K.E."/>
            <person name="Medigue C."/>
            <person name="Danchin A."/>
        </authorList>
    </citation>
    <scope>IDENTIFICATION</scope>
</reference>